<proteinExistence type="evidence at protein level"/>
<gene>
    <name type="primary">Cops4</name>
    <name type="synonym">Csn4</name>
</gene>
<sequence length="406" mass="46285">MAAAVRQDLAQLMNSSGSHKDLAGKYRQILEKAIQLSGTEQLEALKAFVEAMVNENVSLVISRQLLTDFCTHLPNLPDSTAKEVYHFTLEKIQPRVISFEEQVASIRQHLASIYEKEEDWRNAAQVLVGIPLETGQKQYNVDYKLETYLKIARLYLEDDDPVQAEAYINRASLLQNESTNEQLQIHYKVCYARVLDYRRKFIEAAQRYNELSYKTIVHESERLEALKHALHCTILASAGQQRSRMLATLFKDERCQQLAAYGILEKMYLDRIIRGNQLQEFAAMLMPHQKATTADGSSILDRAVIEHNLLSASKLYNNITFEELGALLEIPAAKAEKIASQMITEGRMNGFIDQIDGIVHFETREALPTWDKQIQSLCFQVNNLLEKISQTAPEWTAQAMEAQMAQ</sequence>
<reference key="1">
    <citation type="journal article" date="1998" name="Curr. Biol.">
        <title>The COP9 complex is conserved between plants and mammals and is related to the 26S proteasome regulatory complex.</title>
        <authorList>
            <person name="Wei N."/>
            <person name="Tsuge T."/>
            <person name="Serino G."/>
            <person name="Dohmae N."/>
            <person name="Takio K."/>
            <person name="Matsui M."/>
            <person name="Deng X.-W."/>
        </authorList>
    </citation>
    <scope>NUCLEOTIDE SEQUENCE [MRNA]</scope>
    <scope>IDENTIFICATION IN THE CSN COMPLEX</scope>
</reference>
<reference key="2">
    <citation type="journal article" date="2005" name="Science">
        <title>The transcriptional landscape of the mammalian genome.</title>
        <authorList>
            <person name="Carninci P."/>
            <person name="Kasukawa T."/>
            <person name="Katayama S."/>
            <person name="Gough J."/>
            <person name="Frith M.C."/>
            <person name="Maeda N."/>
            <person name="Oyama R."/>
            <person name="Ravasi T."/>
            <person name="Lenhard B."/>
            <person name="Wells C."/>
            <person name="Kodzius R."/>
            <person name="Shimokawa K."/>
            <person name="Bajic V.B."/>
            <person name="Brenner S.E."/>
            <person name="Batalov S."/>
            <person name="Forrest A.R."/>
            <person name="Zavolan M."/>
            <person name="Davis M.J."/>
            <person name="Wilming L.G."/>
            <person name="Aidinis V."/>
            <person name="Allen J.E."/>
            <person name="Ambesi-Impiombato A."/>
            <person name="Apweiler R."/>
            <person name="Aturaliya R.N."/>
            <person name="Bailey T.L."/>
            <person name="Bansal M."/>
            <person name="Baxter L."/>
            <person name="Beisel K.W."/>
            <person name="Bersano T."/>
            <person name="Bono H."/>
            <person name="Chalk A.M."/>
            <person name="Chiu K.P."/>
            <person name="Choudhary V."/>
            <person name="Christoffels A."/>
            <person name="Clutterbuck D.R."/>
            <person name="Crowe M.L."/>
            <person name="Dalla E."/>
            <person name="Dalrymple B.P."/>
            <person name="de Bono B."/>
            <person name="Della Gatta G."/>
            <person name="di Bernardo D."/>
            <person name="Down T."/>
            <person name="Engstrom P."/>
            <person name="Fagiolini M."/>
            <person name="Faulkner G."/>
            <person name="Fletcher C.F."/>
            <person name="Fukushima T."/>
            <person name="Furuno M."/>
            <person name="Futaki S."/>
            <person name="Gariboldi M."/>
            <person name="Georgii-Hemming P."/>
            <person name="Gingeras T.R."/>
            <person name="Gojobori T."/>
            <person name="Green R.E."/>
            <person name="Gustincich S."/>
            <person name="Harbers M."/>
            <person name="Hayashi Y."/>
            <person name="Hensch T.K."/>
            <person name="Hirokawa N."/>
            <person name="Hill D."/>
            <person name="Huminiecki L."/>
            <person name="Iacono M."/>
            <person name="Ikeo K."/>
            <person name="Iwama A."/>
            <person name="Ishikawa T."/>
            <person name="Jakt M."/>
            <person name="Kanapin A."/>
            <person name="Katoh M."/>
            <person name="Kawasawa Y."/>
            <person name="Kelso J."/>
            <person name="Kitamura H."/>
            <person name="Kitano H."/>
            <person name="Kollias G."/>
            <person name="Krishnan S.P."/>
            <person name="Kruger A."/>
            <person name="Kummerfeld S.K."/>
            <person name="Kurochkin I.V."/>
            <person name="Lareau L.F."/>
            <person name="Lazarevic D."/>
            <person name="Lipovich L."/>
            <person name="Liu J."/>
            <person name="Liuni S."/>
            <person name="McWilliam S."/>
            <person name="Madan Babu M."/>
            <person name="Madera M."/>
            <person name="Marchionni L."/>
            <person name="Matsuda H."/>
            <person name="Matsuzawa S."/>
            <person name="Miki H."/>
            <person name="Mignone F."/>
            <person name="Miyake S."/>
            <person name="Morris K."/>
            <person name="Mottagui-Tabar S."/>
            <person name="Mulder N."/>
            <person name="Nakano N."/>
            <person name="Nakauchi H."/>
            <person name="Ng P."/>
            <person name="Nilsson R."/>
            <person name="Nishiguchi S."/>
            <person name="Nishikawa S."/>
            <person name="Nori F."/>
            <person name="Ohara O."/>
            <person name="Okazaki Y."/>
            <person name="Orlando V."/>
            <person name="Pang K.C."/>
            <person name="Pavan W.J."/>
            <person name="Pavesi G."/>
            <person name="Pesole G."/>
            <person name="Petrovsky N."/>
            <person name="Piazza S."/>
            <person name="Reed J."/>
            <person name="Reid J.F."/>
            <person name="Ring B.Z."/>
            <person name="Ringwald M."/>
            <person name="Rost B."/>
            <person name="Ruan Y."/>
            <person name="Salzberg S.L."/>
            <person name="Sandelin A."/>
            <person name="Schneider C."/>
            <person name="Schoenbach C."/>
            <person name="Sekiguchi K."/>
            <person name="Semple C.A."/>
            <person name="Seno S."/>
            <person name="Sessa L."/>
            <person name="Sheng Y."/>
            <person name="Shibata Y."/>
            <person name="Shimada H."/>
            <person name="Shimada K."/>
            <person name="Silva D."/>
            <person name="Sinclair B."/>
            <person name="Sperling S."/>
            <person name="Stupka E."/>
            <person name="Sugiura K."/>
            <person name="Sultana R."/>
            <person name="Takenaka Y."/>
            <person name="Taki K."/>
            <person name="Tammoja K."/>
            <person name="Tan S.L."/>
            <person name="Tang S."/>
            <person name="Taylor M.S."/>
            <person name="Tegner J."/>
            <person name="Teichmann S.A."/>
            <person name="Ueda H.R."/>
            <person name="van Nimwegen E."/>
            <person name="Verardo R."/>
            <person name="Wei C.L."/>
            <person name="Yagi K."/>
            <person name="Yamanishi H."/>
            <person name="Zabarovsky E."/>
            <person name="Zhu S."/>
            <person name="Zimmer A."/>
            <person name="Hide W."/>
            <person name="Bult C."/>
            <person name="Grimmond S.M."/>
            <person name="Teasdale R.D."/>
            <person name="Liu E.T."/>
            <person name="Brusic V."/>
            <person name="Quackenbush J."/>
            <person name="Wahlestedt C."/>
            <person name="Mattick J.S."/>
            <person name="Hume D.A."/>
            <person name="Kai C."/>
            <person name="Sasaki D."/>
            <person name="Tomaru Y."/>
            <person name="Fukuda S."/>
            <person name="Kanamori-Katayama M."/>
            <person name="Suzuki M."/>
            <person name="Aoki J."/>
            <person name="Arakawa T."/>
            <person name="Iida J."/>
            <person name="Imamura K."/>
            <person name="Itoh M."/>
            <person name="Kato T."/>
            <person name="Kawaji H."/>
            <person name="Kawagashira N."/>
            <person name="Kawashima T."/>
            <person name="Kojima M."/>
            <person name="Kondo S."/>
            <person name="Konno H."/>
            <person name="Nakano K."/>
            <person name="Ninomiya N."/>
            <person name="Nishio T."/>
            <person name="Okada M."/>
            <person name="Plessy C."/>
            <person name="Shibata K."/>
            <person name="Shiraki T."/>
            <person name="Suzuki S."/>
            <person name="Tagami M."/>
            <person name="Waki K."/>
            <person name="Watahiki A."/>
            <person name="Okamura-Oho Y."/>
            <person name="Suzuki H."/>
            <person name="Kawai J."/>
            <person name="Hayashizaki Y."/>
        </authorList>
    </citation>
    <scope>NUCLEOTIDE SEQUENCE [LARGE SCALE MRNA]</scope>
    <source>
        <strain>C57BL/6J</strain>
        <tissue>Tongue</tissue>
    </source>
</reference>
<reference key="3">
    <citation type="submission" date="2007-03" db="UniProtKB">
        <authorList>
            <person name="Lubec G."/>
            <person name="Klug S."/>
        </authorList>
    </citation>
    <scope>PROTEIN SEQUENCE OF 96-107; 154-170 AND 228-242</scope>
    <scope>IDENTIFICATION BY MASS SPECTROMETRY</scope>
    <source>
        <tissue>Hippocampus</tissue>
    </source>
</reference>
<reference key="4">
    <citation type="journal article" date="2010" name="Cell">
        <title>A tissue-specific atlas of mouse protein phosphorylation and expression.</title>
        <authorList>
            <person name="Huttlin E.L."/>
            <person name="Jedrychowski M.P."/>
            <person name="Elias J.E."/>
            <person name="Goswami T."/>
            <person name="Rad R."/>
            <person name="Beausoleil S.A."/>
            <person name="Villen J."/>
            <person name="Haas W."/>
            <person name="Sowa M.E."/>
            <person name="Gygi S.P."/>
        </authorList>
    </citation>
    <scope>IDENTIFICATION BY MASS SPECTROMETRY [LARGE SCALE ANALYSIS]</scope>
    <source>
        <tissue>Brain</tissue>
        <tissue>Brown adipose tissue</tissue>
        <tissue>Heart</tissue>
        <tissue>Kidney</tissue>
        <tissue>Liver</tissue>
        <tissue>Lung</tissue>
        <tissue>Pancreas</tissue>
        <tissue>Spleen</tissue>
        <tissue>Testis</tissue>
    </source>
</reference>
<reference key="5">
    <citation type="submission" date="2004-06" db="PDB data bank">
        <title>Solution structure of the PCI domain.</title>
        <authorList>
            <consortium name="RIKEN structural genomics initiative (RSGI)"/>
        </authorList>
    </citation>
    <scope>STRUCTURE BY NMR OF 296-366</scope>
</reference>
<organism>
    <name type="scientific">Mus musculus</name>
    <name type="common">Mouse</name>
    <dbReference type="NCBI Taxonomy" id="10090"/>
    <lineage>
        <taxon>Eukaryota</taxon>
        <taxon>Metazoa</taxon>
        <taxon>Chordata</taxon>
        <taxon>Craniata</taxon>
        <taxon>Vertebrata</taxon>
        <taxon>Euteleostomi</taxon>
        <taxon>Mammalia</taxon>
        <taxon>Eutheria</taxon>
        <taxon>Euarchontoglires</taxon>
        <taxon>Glires</taxon>
        <taxon>Rodentia</taxon>
        <taxon>Myomorpha</taxon>
        <taxon>Muroidea</taxon>
        <taxon>Muridae</taxon>
        <taxon>Murinae</taxon>
        <taxon>Mus</taxon>
        <taxon>Mus</taxon>
    </lineage>
</organism>
<protein>
    <recommendedName>
        <fullName>COP9 signalosome complex subunit 4</fullName>
        <shortName>SGN4</shortName>
        <shortName>Signalosome subunit 4</shortName>
    </recommendedName>
    <alternativeName>
        <fullName>JAB1-containing signalosome subunit 4</fullName>
    </alternativeName>
</protein>
<comment type="function">
    <text evidence="1">Component of the COP9 signalosome complex (CSN), a complex involved in various cellular and developmental processes (By similarity). The CSN complex is an essential regulator of the ubiquitin (Ubl) conjugation pathway by mediating the deneddylation of the cullin subunits of SCF-type E3 ligase complexes, leading to decrease the Ubl ligase activity of SCF-type complexes such as SCF, CSA or DDB2 (By similarity). Also involved in the deneddylation of non-cullin subunits such as STON2 (By similarity). The complex is also involved in phosphorylation of p53/TP53, c-jun/JUN, IkappaBalpha/NFKBIA, ITPK1, IRF8/ICSBP and SNAPIN, possibly via its association with CK2 and PKD kinases (By similarity). CSN-dependent phosphorylation of TP53 and JUN promotes and protects degradation by the Ubl system, respectively (By similarity).</text>
</comment>
<comment type="subunit">
    <text evidence="1 3">Component of the CSN complex, composed of COPS1/GPS1, COPS2, COPS3, COPS4, COPS5, COPS6, COPS7 (COPS7A or COPS7B), COPS8 and COPS9 (PubMed:9707402). In the complex, it probably interacts directly with COPS1, COPS2, COPS3, COPS5, COPS6, COPS7 (COPS7A or COPS7B) and COPS8 (By similarity). Interacts with TOR1A; the interaction is direct and associates TOR1A and SNAPIN with the CSN complex (By similarity). Interacts with STON2; controls STON2 neddylation levels (By similarity). Interacts with ERCC6 (By similarity).</text>
</comment>
<comment type="interaction">
    <interactant intactId="EBI-646659">
        <id>O88544</id>
    </interactant>
    <interactant intactId="EBI-646643">
        <id>Q9QXJ2</id>
        <label>Stat2</label>
    </interactant>
    <organismsDiffer>false</organismsDiffer>
    <experiments>6</experiments>
</comment>
<comment type="subcellular location">
    <subcellularLocation>
        <location evidence="1">Cytoplasm</location>
    </subcellularLocation>
    <subcellularLocation>
        <location evidence="1">Nucleus</location>
    </subcellularLocation>
    <subcellularLocation>
        <location evidence="1">Cytoplasmic vesicle</location>
        <location evidence="1">Secretory vesicle</location>
        <location evidence="1">Synaptic vesicle</location>
    </subcellularLocation>
</comment>
<comment type="similarity">
    <text evidence="4">Belongs to the CSN4 family.</text>
</comment>
<keyword id="KW-0002">3D-structure</keyword>
<keyword id="KW-0007">Acetylation</keyword>
<keyword id="KW-0963">Cytoplasm</keyword>
<keyword id="KW-0968">Cytoplasmic vesicle</keyword>
<keyword id="KW-0903">Direct protein sequencing</keyword>
<keyword id="KW-0539">Nucleus</keyword>
<keyword id="KW-1185">Reference proteome</keyword>
<keyword id="KW-0736">Signalosome</keyword>
<keyword id="KW-0770">Synapse</keyword>
<evidence type="ECO:0000250" key="1">
    <source>
        <dbReference type="UniProtKB" id="Q9BT78"/>
    </source>
</evidence>
<evidence type="ECO:0000255" key="2">
    <source>
        <dbReference type="PROSITE-ProRule" id="PRU01185"/>
    </source>
</evidence>
<evidence type="ECO:0000269" key="3">
    <source>
    </source>
</evidence>
<evidence type="ECO:0000305" key="4"/>
<evidence type="ECO:0007829" key="5">
    <source>
        <dbReference type="PDB" id="1UFM"/>
    </source>
</evidence>
<dbReference type="EMBL" id="AF071314">
    <property type="protein sequence ID" value="AAC33901.1"/>
    <property type="molecule type" value="mRNA"/>
</dbReference>
<dbReference type="EMBL" id="AK009955">
    <property type="protein sequence ID" value="BAB26607.1"/>
    <property type="molecule type" value="mRNA"/>
</dbReference>
<dbReference type="CCDS" id="CCDS19463.1"/>
<dbReference type="RefSeq" id="NP_036131.1">
    <property type="nucleotide sequence ID" value="NM_012001.3"/>
</dbReference>
<dbReference type="PDB" id="1UFM">
    <property type="method" value="NMR"/>
    <property type="chains" value="A=296-366"/>
</dbReference>
<dbReference type="PDBsum" id="1UFM"/>
<dbReference type="SMR" id="O88544"/>
<dbReference type="BioGRID" id="205043">
    <property type="interactions" value="37"/>
</dbReference>
<dbReference type="CORUM" id="O88544"/>
<dbReference type="FunCoup" id="O88544">
    <property type="interactions" value="4314"/>
</dbReference>
<dbReference type="IntAct" id="O88544">
    <property type="interactions" value="3"/>
</dbReference>
<dbReference type="STRING" id="10090.ENSMUSP00000048416"/>
<dbReference type="GlyGen" id="O88544">
    <property type="glycosylation" value="1 site, 1 N-linked glycan (1 site)"/>
</dbReference>
<dbReference type="iPTMnet" id="O88544"/>
<dbReference type="PhosphoSitePlus" id="O88544"/>
<dbReference type="SwissPalm" id="O88544"/>
<dbReference type="REPRODUCTION-2DPAGE" id="O88544"/>
<dbReference type="jPOST" id="O88544"/>
<dbReference type="PaxDb" id="10090-ENSMUSP00000048416"/>
<dbReference type="PeptideAtlas" id="O88544"/>
<dbReference type="ProteomicsDB" id="285377"/>
<dbReference type="Pumba" id="O88544"/>
<dbReference type="Antibodypedia" id="14119">
    <property type="antibodies" value="132 antibodies from 26 providers"/>
</dbReference>
<dbReference type="DNASU" id="26891"/>
<dbReference type="Ensembl" id="ENSMUST00000045993.15">
    <property type="protein sequence ID" value="ENSMUSP00000048416.9"/>
    <property type="gene ID" value="ENSMUSG00000035297.15"/>
</dbReference>
<dbReference type="GeneID" id="26891"/>
<dbReference type="KEGG" id="mmu:26891"/>
<dbReference type="UCSC" id="uc008yhs.2">
    <property type="organism name" value="mouse"/>
</dbReference>
<dbReference type="AGR" id="MGI:1349414"/>
<dbReference type="CTD" id="51138"/>
<dbReference type="MGI" id="MGI:1349414">
    <property type="gene designation" value="Cops4"/>
</dbReference>
<dbReference type="VEuPathDB" id="HostDB:ENSMUSG00000035297"/>
<dbReference type="eggNOG" id="KOG1497">
    <property type="taxonomic scope" value="Eukaryota"/>
</dbReference>
<dbReference type="GeneTree" id="ENSGT00940000153510"/>
<dbReference type="HOGENOM" id="CLU_028132_1_0_1"/>
<dbReference type="InParanoid" id="O88544"/>
<dbReference type="OMA" id="KNIMHTV"/>
<dbReference type="OrthoDB" id="295656at2759"/>
<dbReference type="PhylomeDB" id="O88544"/>
<dbReference type="TreeFam" id="TF101147"/>
<dbReference type="Reactome" id="R-MMU-5696394">
    <property type="pathway name" value="DNA Damage Recognition in GG-NER"/>
</dbReference>
<dbReference type="Reactome" id="R-MMU-6781823">
    <property type="pathway name" value="Formation of TC-NER Pre-Incision Complex"/>
</dbReference>
<dbReference type="Reactome" id="R-MMU-8856825">
    <property type="pathway name" value="Cargo recognition for clathrin-mediated endocytosis"/>
</dbReference>
<dbReference type="Reactome" id="R-MMU-8951664">
    <property type="pathway name" value="Neddylation"/>
</dbReference>
<dbReference type="Reactome" id="R-MMU-9013422">
    <property type="pathway name" value="RHOBTB1 GTPase cycle"/>
</dbReference>
<dbReference type="BioGRID-ORCS" id="26891">
    <property type="hits" value="28 hits in 78 CRISPR screens"/>
</dbReference>
<dbReference type="ChiTaRS" id="Cops4">
    <property type="organism name" value="mouse"/>
</dbReference>
<dbReference type="EvolutionaryTrace" id="O88544"/>
<dbReference type="PRO" id="PR:O88544"/>
<dbReference type="Proteomes" id="UP000000589">
    <property type="component" value="Chromosome 5"/>
</dbReference>
<dbReference type="RNAct" id="O88544">
    <property type="molecule type" value="protein"/>
</dbReference>
<dbReference type="Bgee" id="ENSMUSG00000035297">
    <property type="expression patterns" value="Expressed in spermatid and 269 other cell types or tissues"/>
</dbReference>
<dbReference type="ExpressionAtlas" id="O88544">
    <property type="expression patterns" value="baseline and differential"/>
</dbReference>
<dbReference type="GO" id="GO:0008180">
    <property type="term" value="C:COP9 signalosome"/>
    <property type="evidence" value="ECO:0000314"/>
    <property type="project" value="MGI"/>
</dbReference>
<dbReference type="GO" id="GO:0016607">
    <property type="term" value="C:nuclear speck"/>
    <property type="evidence" value="ECO:0007669"/>
    <property type="project" value="Ensembl"/>
</dbReference>
<dbReference type="GO" id="GO:0008021">
    <property type="term" value="C:synaptic vesicle"/>
    <property type="evidence" value="ECO:0007669"/>
    <property type="project" value="UniProtKB-SubCell"/>
</dbReference>
<dbReference type="GO" id="GO:0000338">
    <property type="term" value="P:protein deneddylation"/>
    <property type="evidence" value="ECO:0000250"/>
    <property type="project" value="UniProtKB"/>
</dbReference>
<dbReference type="FunFam" id="1.10.10.10:FF:000130">
    <property type="entry name" value="COP9 signalosome complex subunit 4"/>
    <property type="match status" value="1"/>
</dbReference>
<dbReference type="Gene3D" id="1.10.10.10">
    <property type="entry name" value="Winged helix-like DNA-binding domain superfamily/Winged helix DNA-binding domain"/>
    <property type="match status" value="1"/>
</dbReference>
<dbReference type="InterPro" id="IPR041406">
    <property type="entry name" value="CSN4_HTH"/>
</dbReference>
<dbReference type="InterPro" id="IPR000717">
    <property type="entry name" value="PCI_dom"/>
</dbReference>
<dbReference type="InterPro" id="IPR054559">
    <property type="entry name" value="PSMD12-CSN4-like_N"/>
</dbReference>
<dbReference type="InterPro" id="IPR040134">
    <property type="entry name" value="PSMD12/CSN4"/>
</dbReference>
<dbReference type="InterPro" id="IPR036388">
    <property type="entry name" value="WH-like_DNA-bd_sf"/>
</dbReference>
<dbReference type="InterPro" id="IPR036390">
    <property type="entry name" value="WH_DNA-bd_sf"/>
</dbReference>
<dbReference type="PANTHER" id="PTHR10855">
    <property type="entry name" value="26S PROTEASOME NON-ATPASE REGULATORY SUBUNIT 12/COP9 SIGNALOSOME COMPLEX SUBUNIT 4"/>
    <property type="match status" value="1"/>
</dbReference>
<dbReference type="PANTHER" id="PTHR10855:SF2">
    <property type="entry name" value="COP9 SIGNALOSOME COMPLEX SUBUNIT 4"/>
    <property type="match status" value="1"/>
</dbReference>
<dbReference type="Pfam" id="PF18420">
    <property type="entry name" value="CSN4_RPN5_eIF3a"/>
    <property type="match status" value="1"/>
</dbReference>
<dbReference type="Pfam" id="PF01399">
    <property type="entry name" value="PCI"/>
    <property type="match status" value="1"/>
</dbReference>
<dbReference type="Pfam" id="PF22241">
    <property type="entry name" value="PSMD12-CSN4_N"/>
    <property type="match status" value="1"/>
</dbReference>
<dbReference type="SMART" id="SM00088">
    <property type="entry name" value="PINT"/>
    <property type="match status" value="1"/>
</dbReference>
<dbReference type="SUPFAM" id="SSF46785">
    <property type="entry name" value="Winged helix' DNA-binding domain"/>
    <property type="match status" value="1"/>
</dbReference>
<dbReference type="PROSITE" id="PS50250">
    <property type="entry name" value="PCI"/>
    <property type="match status" value="1"/>
</dbReference>
<feature type="initiator methionine" description="Removed" evidence="1">
    <location>
        <position position="1"/>
    </location>
</feature>
<feature type="chain" id="PRO_0000120988" description="COP9 signalosome complex subunit 4">
    <location>
        <begin position="2"/>
        <end position="406"/>
    </location>
</feature>
<feature type="domain" description="PCI" evidence="2">
    <location>
        <begin position="197"/>
        <end position="366"/>
    </location>
</feature>
<feature type="modified residue" description="N-acetylalanine" evidence="1">
    <location>
        <position position="2"/>
    </location>
</feature>
<feature type="modified residue" description="N6-acetyllysine" evidence="1">
    <location>
        <position position="25"/>
    </location>
</feature>
<feature type="helix" evidence="5">
    <location>
        <begin position="302"/>
        <end position="314"/>
    </location>
</feature>
<feature type="strand" evidence="5">
    <location>
        <begin position="317"/>
        <end position="320"/>
    </location>
</feature>
<feature type="helix" evidence="5">
    <location>
        <begin position="321"/>
        <end position="327"/>
    </location>
</feature>
<feature type="helix" evidence="5">
    <location>
        <begin position="332"/>
        <end position="344"/>
    </location>
</feature>
<feature type="strand" evidence="5">
    <location>
        <begin position="350"/>
        <end position="353"/>
    </location>
</feature>
<feature type="turn" evidence="5">
    <location>
        <begin position="354"/>
        <end position="357"/>
    </location>
</feature>
<feature type="strand" evidence="5">
    <location>
        <begin position="358"/>
        <end position="361"/>
    </location>
</feature>
<accession>O88544</accession>
<name>CSN4_MOUSE</name>